<proteinExistence type="inferred from homology"/>
<comment type="function">
    <text evidence="1">NDH-1 shuttles electrons from NADH, via FMN and iron-sulfur (Fe-S) centers, to quinones in the respiratory chain. The immediate electron acceptor for the enzyme in this species is believed to be ubiquinone. Couples the redox reaction to proton translocation (for every two electrons transferred, four hydrogen ions are translocated across the cytoplasmic membrane), and thus conserves the redox energy in a proton gradient.</text>
</comment>
<comment type="catalytic activity">
    <reaction evidence="1">
        <text>a quinone + NADH + 5 H(+)(in) = a quinol + NAD(+) + 4 H(+)(out)</text>
        <dbReference type="Rhea" id="RHEA:57888"/>
        <dbReference type="ChEBI" id="CHEBI:15378"/>
        <dbReference type="ChEBI" id="CHEBI:24646"/>
        <dbReference type="ChEBI" id="CHEBI:57540"/>
        <dbReference type="ChEBI" id="CHEBI:57945"/>
        <dbReference type="ChEBI" id="CHEBI:132124"/>
    </reaction>
</comment>
<comment type="subunit">
    <text evidence="1">NDH-1 is composed of 14 different subunits. Subunits NuoB, C, D, E, F, and G constitute the peripheral sector of the complex.</text>
</comment>
<comment type="subcellular location">
    <subcellularLocation>
        <location evidence="1">Cell inner membrane</location>
        <topology evidence="1">Peripheral membrane protein</topology>
        <orientation evidence="1">Cytoplasmic side</orientation>
    </subcellularLocation>
</comment>
<comment type="similarity">
    <text evidence="1">Belongs to the complex I 49 kDa subunit family.</text>
</comment>
<accession>A7H5S8</accession>
<sequence length="408" mass="46945">MQIPSKLKPYYENIAFEQEDSKMIINLGPQHPSAHGNLRLILELDGEQVVKARPCIGYMHRGMEKMAENMIYQEFIPTTDRMDYIAASANNYAYCAAVEKLCGLEIPRRAAVIRMILLELNRITSHLLWLATHALDIGAMSVFLYCFREREYVLDLIEKYCGARLTHSSMRIGGVMLDLPENYLEEMLVFCDKFPNDLKDYEDLLDDNRIWRLRTENVGVVTKEQALNWGCTGVMLRGSGIKYDIRKEEPYLLYNEVEFGVPYATQGDSYARYKVYMQEFRESLKILRQCATLYKDTPPEILATHPEYVSASKEQILTQNYSLMQHFVLITQGLKPPKGEVYVPTESPKGELGFFIHSDGTGRPYRLKARTPSYWHCAFFEEMLVGTYLADVVAIMGNVNIVLGEIDR</sequence>
<protein>
    <recommendedName>
        <fullName evidence="1">NADH-quinone oxidoreductase subunit D</fullName>
        <ecNumber evidence="1">7.1.1.-</ecNumber>
    </recommendedName>
    <alternativeName>
        <fullName evidence="1">NADH dehydrogenase I subunit D</fullName>
    </alternativeName>
    <alternativeName>
        <fullName evidence="1">NDH-1 subunit D</fullName>
    </alternativeName>
</protein>
<organism>
    <name type="scientific">Campylobacter jejuni subsp. doylei (strain ATCC BAA-1458 / RM4099 / 269.97)</name>
    <dbReference type="NCBI Taxonomy" id="360109"/>
    <lineage>
        <taxon>Bacteria</taxon>
        <taxon>Pseudomonadati</taxon>
        <taxon>Campylobacterota</taxon>
        <taxon>Epsilonproteobacteria</taxon>
        <taxon>Campylobacterales</taxon>
        <taxon>Campylobacteraceae</taxon>
        <taxon>Campylobacter</taxon>
    </lineage>
</organism>
<reference key="1">
    <citation type="submission" date="2007-07" db="EMBL/GenBank/DDBJ databases">
        <title>Complete genome sequence of Campylobacter jejuni subsp doylei 269.97 isolated from human blood.</title>
        <authorList>
            <person name="Fouts D.E."/>
            <person name="Mongodin E.F."/>
            <person name="Puiu D."/>
            <person name="Sebastian Y."/>
            <person name="Miller W.G."/>
            <person name="Mandrell R.E."/>
            <person name="Lastovica A.J."/>
            <person name="Nelson K.E."/>
        </authorList>
    </citation>
    <scope>NUCLEOTIDE SEQUENCE [LARGE SCALE GENOMIC DNA]</scope>
    <source>
        <strain>ATCC BAA-1458 / RM4099 / 269.97</strain>
    </source>
</reference>
<name>NUOD_CAMJD</name>
<evidence type="ECO:0000255" key="1">
    <source>
        <dbReference type="HAMAP-Rule" id="MF_01358"/>
    </source>
</evidence>
<dbReference type="EC" id="7.1.1.-" evidence="1"/>
<dbReference type="EMBL" id="CP000768">
    <property type="protein sequence ID" value="ABS44730.1"/>
    <property type="molecule type" value="Genomic_DNA"/>
</dbReference>
<dbReference type="SMR" id="A7H5S8"/>
<dbReference type="KEGG" id="cjd:JJD26997_1927"/>
<dbReference type="HOGENOM" id="CLU_015134_1_2_7"/>
<dbReference type="Proteomes" id="UP000002302">
    <property type="component" value="Chromosome"/>
</dbReference>
<dbReference type="GO" id="GO:0005886">
    <property type="term" value="C:plasma membrane"/>
    <property type="evidence" value="ECO:0007669"/>
    <property type="project" value="UniProtKB-SubCell"/>
</dbReference>
<dbReference type="GO" id="GO:0051287">
    <property type="term" value="F:NAD binding"/>
    <property type="evidence" value="ECO:0007669"/>
    <property type="project" value="InterPro"/>
</dbReference>
<dbReference type="GO" id="GO:0050136">
    <property type="term" value="F:NADH:ubiquinone reductase (non-electrogenic) activity"/>
    <property type="evidence" value="ECO:0007669"/>
    <property type="project" value="UniProtKB-UniRule"/>
</dbReference>
<dbReference type="GO" id="GO:0048038">
    <property type="term" value="F:quinone binding"/>
    <property type="evidence" value="ECO:0007669"/>
    <property type="project" value="UniProtKB-KW"/>
</dbReference>
<dbReference type="Gene3D" id="1.10.645.10">
    <property type="entry name" value="Cytochrome-c3 Hydrogenase, chain B"/>
    <property type="match status" value="1"/>
</dbReference>
<dbReference type="HAMAP" id="MF_01358">
    <property type="entry name" value="NDH1_NuoD"/>
    <property type="match status" value="1"/>
</dbReference>
<dbReference type="InterPro" id="IPR001135">
    <property type="entry name" value="NADH_Q_OxRdtase_suD"/>
</dbReference>
<dbReference type="InterPro" id="IPR022885">
    <property type="entry name" value="NDH1_su_D/H"/>
</dbReference>
<dbReference type="InterPro" id="IPR029014">
    <property type="entry name" value="NiFe-Hase_large"/>
</dbReference>
<dbReference type="NCBIfam" id="TIGR01962">
    <property type="entry name" value="NuoD"/>
    <property type="match status" value="1"/>
</dbReference>
<dbReference type="NCBIfam" id="NF004739">
    <property type="entry name" value="PRK06075.1"/>
    <property type="match status" value="1"/>
</dbReference>
<dbReference type="PANTHER" id="PTHR11993:SF10">
    <property type="entry name" value="NADH DEHYDROGENASE [UBIQUINONE] IRON-SULFUR PROTEIN 2, MITOCHONDRIAL"/>
    <property type="match status" value="1"/>
</dbReference>
<dbReference type="PANTHER" id="PTHR11993">
    <property type="entry name" value="NADH-UBIQUINONE OXIDOREDUCTASE 49 KDA SUBUNIT"/>
    <property type="match status" value="1"/>
</dbReference>
<dbReference type="Pfam" id="PF00346">
    <property type="entry name" value="Complex1_49kDa"/>
    <property type="match status" value="1"/>
</dbReference>
<dbReference type="SUPFAM" id="SSF56762">
    <property type="entry name" value="HydB/Nqo4-like"/>
    <property type="match status" value="1"/>
</dbReference>
<feature type="chain" id="PRO_0000371847" description="NADH-quinone oxidoreductase subunit D">
    <location>
        <begin position="1"/>
        <end position="408"/>
    </location>
</feature>
<gene>
    <name evidence="1" type="primary">nuoD</name>
    <name type="ordered locus">JJD26997_1927</name>
</gene>
<keyword id="KW-0997">Cell inner membrane</keyword>
<keyword id="KW-1003">Cell membrane</keyword>
<keyword id="KW-0472">Membrane</keyword>
<keyword id="KW-0520">NAD</keyword>
<keyword id="KW-0874">Quinone</keyword>
<keyword id="KW-1278">Translocase</keyword>
<keyword id="KW-0813">Transport</keyword>
<keyword id="KW-0830">Ubiquinone</keyword>